<dbReference type="EMBL" id="L24203">
    <property type="protein sequence ID" value="AAA35762.1"/>
    <property type="molecule type" value="mRNA"/>
</dbReference>
<dbReference type="EMBL" id="AF230388">
    <property type="protein sequence ID" value="AAG50167.1"/>
    <property type="molecule type" value="mRNA"/>
</dbReference>
<dbReference type="EMBL" id="AF230389">
    <property type="protein sequence ID" value="AAG50168.1"/>
    <property type="molecule type" value="mRNA"/>
</dbReference>
<dbReference type="EMBL" id="BC017352">
    <property type="protein sequence ID" value="AAH17352.1"/>
    <property type="molecule type" value="mRNA"/>
</dbReference>
<dbReference type="CCDS" id="CCDS8428.1">
    <molecule id="Q14134-1"/>
</dbReference>
<dbReference type="PIR" id="A49618">
    <property type="entry name" value="A49618"/>
</dbReference>
<dbReference type="RefSeq" id="NP_036233.2">
    <molecule id="Q14134-1"/>
    <property type="nucleotide sequence ID" value="NM_012101.3"/>
</dbReference>
<dbReference type="PDB" id="2CSV">
    <property type="method" value="NMR"/>
    <property type="chains" value="A=212-270"/>
</dbReference>
<dbReference type="PDBsum" id="2CSV"/>
<dbReference type="SMR" id="Q14134"/>
<dbReference type="BioGRID" id="117177">
    <property type="interactions" value="273"/>
</dbReference>
<dbReference type="FunCoup" id="Q14134">
    <property type="interactions" value="448"/>
</dbReference>
<dbReference type="IntAct" id="Q14134">
    <property type="interactions" value="137"/>
</dbReference>
<dbReference type="MINT" id="Q14134"/>
<dbReference type="STRING" id="9606.ENSP00000343129"/>
<dbReference type="GlyCosmos" id="Q14134">
    <property type="glycosylation" value="1 site, 1 glycan"/>
</dbReference>
<dbReference type="GlyGen" id="Q14134">
    <property type="glycosylation" value="4 sites, 1 O-linked glycan (4 sites)"/>
</dbReference>
<dbReference type="iPTMnet" id="Q14134"/>
<dbReference type="PhosphoSitePlus" id="Q14134"/>
<dbReference type="BioMuta" id="TRIM29"/>
<dbReference type="DMDM" id="116242825"/>
<dbReference type="jPOST" id="Q14134"/>
<dbReference type="MassIVE" id="Q14134"/>
<dbReference type="PaxDb" id="9606-ENSP00000343129"/>
<dbReference type="PeptideAtlas" id="Q14134"/>
<dbReference type="PRIDE" id="Q14134"/>
<dbReference type="ProteomicsDB" id="59831">
    <molecule id="Q14134-1"/>
</dbReference>
<dbReference type="ProteomicsDB" id="59832">
    <molecule id="Q14134-2"/>
</dbReference>
<dbReference type="Pumba" id="Q14134"/>
<dbReference type="Antibodypedia" id="18856">
    <property type="antibodies" value="607 antibodies from 39 providers"/>
</dbReference>
<dbReference type="DNASU" id="23650"/>
<dbReference type="Ensembl" id="ENST00000341846.10">
    <molecule id="Q14134-1"/>
    <property type="protein sequence ID" value="ENSP00000343129.5"/>
    <property type="gene ID" value="ENSG00000137699.17"/>
</dbReference>
<dbReference type="GeneID" id="23650"/>
<dbReference type="KEGG" id="hsa:23650"/>
<dbReference type="MANE-Select" id="ENST00000341846.10">
    <property type="protein sequence ID" value="ENSP00000343129.5"/>
    <property type="RefSeq nucleotide sequence ID" value="NM_012101.4"/>
    <property type="RefSeq protein sequence ID" value="NP_036233.2"/>
</dbReference>
<dbReference type="UCSC" id="uc001pwz.4">
    <molecule id="Q14134-1"/>
    <property type="organism name" value="human"/>
</dbReference>
<dbReference type="AGR" id="HGNC:17274"/>
<dbReference type="CTD" id="23650"/>
<dbReference type="DisGeNET" id="23650"/>
<dbReference type="GeneCards" id="TRIM29"/>
<dbReference type="HGNC" id="HGNC:17274">
    <property type="gene designation" value="TRIM29"/>
</dbReference>
<dbReference type="HPA" id="ENSG00000137699">
    <property type="expression patterns" value="Tissue enhanced (esophagus, skin, vagina)"/>
</dbReference>
<dbReference type="MIM" id="610658">
    <property type="type" value="gene"/>
</dbReference>
<dbReference type="neXtProt" id="NX_Q14134"/>
<dbReference type="OpenTargets" id="ENSG00000137699"/>
<dbReference type="PharmGKB" id="PA38218"/>
<dbReference type="VEuPathDB" id="HostDB:ENSG00000137699"/>
<dbReference type="eggNOG" id="ENOG502QWDV">
    <property type="taxonomic scope" value="Eukaryota"/>
</dbReference>
<dbReference type="GeneTree" id="ENSGT00940000161416"/>
<dbReference type="HOGENOM" id="CLU_039304_0_0_1"/>
<dbReference type="InParanoid" id="Q14134"/>
<dbReference type="OMA" id="YMNSYTS"/>
<dbReference type="OrthoDB" id="9442597at2759"/>
<dbReference type="PAN-GO" id="Q14134">
    <property type="GO annotations" value="0 GO annotations based on evolutionary models"/>
</dbReference>
<dbReference type="PhylomeDB" id="Q14134"/>
<dbReference type="TreeFam" id="TF351086"/>
<dbReference type="PathwayCommons" id="Q14134"/>
<dbReference type="Reactome" id="R-HSA-877300">
    <property type="pathway name" value="Interferon gamma signaling"/>
</dbReference>
<dbReference type="SignaLink" id="Q14134"/>
<dbReference type="SIGNOR" id="Q14134"/>
<dbReference type="BioGRID-ORCS" id="23650">
    <property type="hits" value="15 hits in 1183 CRISPR screens"/>
</dbReference>
<dbReference type="ChiTaRS" id="TRIM29">
    <property type="organism name" value="human"/>
</dbReference>
<dbReference type="EvolutionaryTrace" id="Q14134"/>
<dbReference type="GeneWiki" id="TRIM29"/>
<dbReference type="GenomeRNAi" id="23650"/>
<dbReference type="Pharos" id="Q14134">
    <property type="development level" value="Tbio"/>
</dbReference>
<dbReference type="PRO" id="PR:Q14134"/>
<dbReference type="Proteomes" id="UP000005640">
    <property type="component" value="Chromosome 11"/>
</dbReference>
<dbReference type="RNAct" id="Q14134">
    <property type="molecule type" value="protein"/>
</dbReference>
<dbReference type="Bgee" id="ENSG00000137699">
    <property type="expression patterns" value="Expressed in lower esophagus mucosa and 150 other cell types or tissues"/>
</dbReference>
<dbReference type="ExpressionAtlas" id="Q14134">
    <property type="expression patterns" value="baseline and differential"/>
</dbReference>
<dbReference type="GO" id="GO:0005912">
    <property type="term" value="C:adherens junction"/>
    <property type="evidence" value="ECO:0007005"/>
    <property type="project" value="BHF-UCL"/>
</dbReference>
<dbReference type="GO" id="GO:0005764">
    <property type="term" value="C:lysosome"/>
    <property type="evidence" value="ECO:0007669"/>
    <property type="project" value="UniProtKB-SubCell"/>
</dbReference>
<dbReference type="GO" id="GO:0098641">
    <property type="term" value="F:cadherin binding involved in cell-cell adhesion"/>
    <property type="evidence" value="ECO:0007005"/>
    <property type="project" value="BHF-UCL"/>
</dbReference>
<dbReference type="GO" id="GO:0042802">
    <property type="term" value="F:identical protein binding"/>
    <property type="evidence" value="ECO:0000353"/>
    <property type="project" value="IntAct"/>
</dbReference>
<dbReference type="GO" id="GO:0002039">
    <property type="term" value="F:p53 binding"/>
    <property type="evidence" value="ECO:0007669"/>
    <property type="project" value="Ensembl"/>
</dbReference>
<dbReference type="GO" id="GO:0008270">
    <property type="term" value="F:zinc ion binding"/>
    <property type="evidence" value="ECO:0007669"/>
    <property type="project" value="UniProtKB-KW"/>
</dbReference>
<dbReference type="GO" id="GO:0045087">
    <property type="term" value="P:innate immune response"/>
    <property type="evidence" value="ECO:0007669"/>
    <property type="project" value="UniProtKB-KW"/>
</dbReference>
<dbReference type="GO" id="GO:1900181">
    <property type="term" value="P:negative regulation of protein localization to nucleus"/>
    <property type="evidence" value="ECO:0007669"/>
    <property type="project" value="Ensembl"/>
</dbReference>
<dbReference type="GO" id="GO:0000122">
    <property type="term" value="P:negative regulation of transcription by RNA polymerase II"/>
    <property type="evidence" value="ECO:0007669"/>
    <property type="project" value="Ensembl"/>
</dbReference>
<dbReference type="CDD" id="cd19840">
    <property type="entry name" value="Bbox1_TRIM29"/>
    <property type="match status" value="1"/>
</dbReference>
<dbReference type="CDD" id="cd19769">
    <property type="entry name" value="Bbox2_TRIM16-like"/>
    <property type="match status" value="1"/>
</dbReference>
<dbReference type="FunFam" id="4.10.830.40:FF:000003">
    <property type="entry name" value="Tripartite motif containing 29"/>
    <property type="match status" value="1"/>
</dbReference>
<dbReference type="FunFam" id="3.30.160.60:FF:000903">
    <property type="entry name" value="Tripartite motif-containing protein 29"/>
    <property type="match status" value="1"/>
</dbReference>
<dbReference type="Gene3D" id="4.10.830.40">
    <property type="match status" value="1"/>
</dbReference>
<dbReference type="Gene3D" id="3.30.160.60">
    <property type="entry name" value="Classic Zinc Finger"/>
    <property type="match status" value="1"/>
</dbReference>
<dbReference type="InterPro" id="IPR051051">
    <property type="entry name" value="E3_ubiq-ligase_TRIM/RNF"/>
</dbReference>
<dbReference type="InterPro" id="IPR000315">
    <property type="entry name" value="Znf_B-box"/>
</dbReference>
<dbReference type="PANTHER" id="PTHR25465">
    <property type="entry name" value="B-BOX DOMAIN CONTAINING"/>
    <property type="match status" value="1"/>
</dbReference>
<dbReference type="PANTHER" id="PTHR25465:SF7">
    <property type="entry name" value="TRIPARTITE MOTIF-CONTAINING PROTEIN 29"/>
    <property type="match status" value="1"/>
</dbReference>
<dbReference type="Pfam" id="PF00643">
    <property type="entry name" value="zf-B_box"/>
    <property type="match status" value="1"/>
</dbReference>
<dbReference type="SMART" id="SM00336">
    <property type="entry name" value="BBOX"/>
    <property type="match status" value="1"/>
</dbReference>
<dbReference type="SUPFAM" id="SSF57845">
    <property type="entry name" value="B-box zinc-binding domain"/>
    <property type="match status" value="1"/>
</dbReference>
<dbReference type="PROSITE" id="PS50119">
    <property type="entry name" value="ZF_BBOX"/>
    <property type="match status" value="1"/>
</dbReference>
<feature type="chain" id="PRO_0000056242" description="Tripartite motif-containing protein 29">
    <location>
        <begin position="1"/>
        <end position="588"/>
    </location>
</feature>
<feature type="zinc finger region" description="B box-type" evidence="2">
    <location>
        <begin position="220"/>
        <end position="260"/>
    </location>
</feature>
<feature type="region of interest" description="Disordered" evidence="3">
    <location>
        <begin position="1"/>
        <end position="66"/>
    </location>
</feature>
<feature type="coiled-coil region" evidence="1">
    <location>
        <begin position="259"/>
        <end position="352"/>
    </location>
</feature>
<feature type="binding site" evidence="2">
    <location>
        <position position="225"/>
    </location>
    <ligand>
        <name>Zn(2+)</name>
        <dbReference type="ChEBI" id="CHEBI:29105"/>
    </ligand>
</feature>
<feature type="binding site" evidence="2">
    <location>
        <position position="228"/>
    </location>
    <ligand>
        <name>Zn(2+)</name>
        <dbReference type="ChEBI" id="CHEBI:29105"/>
    </ligand>
</feature>
<feature type="binding site" evidence="2">
    <location>
        <position position="247"/>
    </location>
    <ligand>
        <name>Zn(2+)</name>
        <dbReference type="ChEBI" id="CHEBI:29105"/>
    </ligand>
</feature>
<feature type="binding site" evidence="2">
    <location>
        <position position="252"/>
    </location>
    <ligand>
        <name>Zn(2+)</name>
        <dbReference type="ChEBI" id="CHEBI:29105"/>
    </ligand>
</feature>
<feature type="modified residue" description="Phosphoserine" evidence="13 14 15">
    <location>
        <position position="21"/>
    </location>
</feature>
<feature type="modified residue" description="Phosphoserine" evidence="15">
    <location>
        <position position="28"/>
    </location>
</feature>
<feature type="modified residue" description="Phosphoserine" evidence="15">
    <location>
        <position position="58"/>
    </location>
</feature>
<feature type="modified residue" description="Phosphoserine" evidence="12 13 14 15">
    <location>
        <position position="104"/>
    </location>
</feature>
<feature type="modified residue" description="Phosphotyrosine" evidence="15">
    <location>
        <position position="106"/>
    </location>
</feature>
<feature type="modified residue" description="Phosphothreonine" evidence="13">
    <location>
        <position position="476"/>
    </location>
</feature>
<feature type="modified residue" description="Phosphoserine" evidence="13">
    <location>
        <position position="489"/>
    </location>
</feature>
<feature type="splice variant" id="VSP_011999" description="In isoform Beta." evidence="10">
    <original>SHYRPFYVNKGNGIGSNEAP</original>
    <variation>VV</variation>
    <location>
        <begin position="569"/>
        <end position="588"/>
    </location>
</feature>
<feature type="sequence variant" id="VAR_035962" description="In a breast cancer sample; somatic mutation; dbSNP:rs112973609." evidence="5">
    <original>S</original>
    <variation>F</variation>
    <location>
        <position position="514"/>
    </location>
</feature>
<feature type="sequence conflict" description="In Ref. 1 and 2." evidence="11" ref="1 2">
    <original>EL</original>
    <variation>DV</variation>
    <location>
        <begin position="126"/>
        <end position="127"/>
    </location>
</feature>
<feature type="strand" evidence="16">
    <location>
        <begin position="217"/>
        <end position="221"/>
    </location>
</feature>
<feature type="turn" evidence="16">
    <location>
        <begin position="226"/>
        <end position="228"/>
    </location>
</feature>
<feature type="strand" evidence="16">
    <location>
        <begin position="234"/>
        <end position="239"/>
    </location>
</feature>
<feature type="helix" evidence="16">
    <location>
        <begin position="245"/>
        <end position="249"/>
    </location>
</feature>
<feature type="turn" evidence="16">
    <location>
        <begin position="250"/>
        <end position="252"/>
    </location>
</feature>
<feature type="strand" evidence="16">
    <location>
        <begin position="253"/>
        <end position="255"/>
    </location>
</feature>
<feature type="strand" evidence="16">
    <location>
        <begin position="257"/>
        <end position="259"/>
    </location>
</feature>
<feature type="helix" evidence="16">
    <location>
        <begin position="260"/>
        <end position="267"/>
    </location>
</feature>
<name>TRI29_HUMAN</name>
<accession>Q14134</accession>
<accession>Q96AA9</accession>
<accession>Q9BZY7</accession>
<sequence length="588" mass="65835">MEAADASRSNGSSPEARDARSPSGPSGSLENGTKADGKDAKTTNGHGGEAAEGKSLGSALKPGEGRSALFAGNEWRRPIIQFVESGDDKNSNYFSMDSMEGKRSPYAGLQLGAAKKPPVTFAEKGELRKSIFSESRKPTVSIMEPGETRRNSYPRADTGLFSRSKSGSEEVLCDSCIGNKQKAVKSCLVCQASFCELHLKPHLEGAAFRDHQLLEPIRDFEARKCPVHGKTMELFCQTDQTCICYLCMFQEHKNHSTVTVEEAKAEKETELSLQKEQLQLKIIEIEDEAEKWQKEKDRIKSFTTNEKAILEQNFRDLVRDLEKQKEEVRAALEQREQDAVDQVKVIMDALDERAKVLHEDKQTREQLHSISDSVLFLQEFGALMSNYSLPPPLPTYHVLLEGEGLGQSLGNFKDDLLNVCMRHVEKMCKADLSRNFIERNHMENGGDHRYVNNYTNSFGGEWSAPDTMKRYSMYLTPKGGVRTSYQPSSPGRFTKETTQKNFNNLYGTKGNYTSRVWEYSSSIQNSDNDLPVVQGSSSFSLKGYPSLMRSQSPKAQPQTWKSGKQTMLSHYRPFYVNKGNGIGSNEAP</sequence>
<comment type="function">
    <text evidence="6 7">Plays a crucial role in the regulation of macrophage activation in response to viral or bacterial infections within the respiratory tract. Mechanistically, TRIM29 interacts with IKBKG/NEMO in the lysosome where it induces its 'Lys-48' ubiquitination and subsequent degradation. In turn, the expression of type I interferons and the production of pro-inflammatory cytokines are inhibited. Additionally, induces the 'Lys-48' ubiquitination of STING1 in a similar way, leading to its degradation.</text>
</comment>
<comment type="subunit">
    <text evidence="6 7 8">Interacts with VIM and HINT1 (PubMed:7644499). Interacts with IKBKG/NEMO (PubMed:27695001). Interacts with STING1 (PubMed:29038422).</text>
</comment>
<comment type="interaction">
    <interactant intactId="EBI-702370">
        <id>Q14134</id>
    </interactant>
    <interactant intactId="EBI-2880652">
        <id>Q08043</id>
        <label>ACTN3</label>
    </interactant>
    <organismsDiffer>false</organismsDiffer>
    <experiments>3</experiments>
</comment>
<comment type="interaction">
    <interactant intactId="EBI-702370">
        <id>Q14134</id>
    </interactant>
    <interactant intactId="EBI-11954519">
        <id>Q49AR9</id>
        <label>ANKS1A</label>
    </interactant>
    <organismsDiffer>false</organismsDiffer>
    <experiments>3</experiments>
</comment>
<comment type="interaction">
    <interactant intactId="EBI-702370">
        <id>Q14134</id>
    </interactant>
    <interactant intactId="EBI-710484">
        <id>O15169</id>
        <label>AXIN1</label>
    </interactant>
    <organismsDiffer>false</organismsDiffer>
    <experiments>2</experiments>
</comment>
<comment type="interaction">
    <interactant intactId="EBI-702370">
        <id>Q14134</id>
    </interactant>
    <interactant intactId="EBI-751319">
        <id>Q9H257</id>
        <label>CARD9</label>
    </interactant>
    <organismsDiffer>false</organismsDiffer>
    <experiments>3</experiments>
</comment>
<comment type="interaction">
    <interactant intactId="EBI-702370">
        <id>Q14134</id>
    </interactant>
    <interactant intactId="EBI-10961624">
        <id>Q2TAC2-2</id>
        <label>CCDC57</label>
    </interactant>
    <organismsDiffer>false</organismsDiffer>
    <experiments>6</experiments>
</comment>
<comment type="interaction">
    <interactant intactId="EBI-702370">
        <id>Q14134</id>
    </interactant>
    <interactant intactId="EBI-739624">
        <id>Q8NHQ1</id>
        <label>CEP70</label>
    </interactant>
    <organismsDiffer>false</organismsDiffer>
    <experiments>5</experiments>
</comment>
<comment type="interaction">
    <interactant intactId="EBI-702370">
        <id>Q14134</id>
    </interactant>
    <interactant intactId="EBI-11988027">
        <id>Q9NRI5-2</id>
        <label>DISC1</label>
    </interactant>
    <organismsDiffer>false</organismsDiffer>
    <experiments>3</experiments>
</comment>
<comment type="interaction">
    <interactant intactId="EBI-702370">
        <id>Q14134</id>
    </interactant>
    <interactant intactId="EBI-740850">
        <id>O14641</id>
        <label>DVL2</label>
    </interactant>
    <organismsDiffer>false</organismsDiffer>
    <experiments>5</experiments>
</comment>
<comment type="interaction">
    <interactant intactId="EBI-702370">
        <id>Q14134</id>
    </interactant>
    <interactant intactId="EBI-746252">
        <id>Q96CN9</id>
        <label>GCC1</label>
    </interactant>
    <organismsDiffer>false</organismsDiffer>
    <experiments>2</experiments>
</comment>
<comment type="interaction">
    <interactant intactId="EBI-702370">
        <id>Q14134</id>
    </interactant>
    <interactant intactId="EBI-618309">
        <id>Q08379</id>
        <label>GOLGA2</label>
    </interactant>
    <organismsDiffer>false</organismsDiffer>
    <experiments>5</experiments>
</comment>
<comment type="interaction">
    <interactant intactId="EBI-702370">
        <id>Q14134</id>
    </interactant>
    <interactant intactId="EBI-373586">
        <id>P49841</id>
        <label>GSK3B</label>
    </interactant>
    <organismsDiffer>false</organismsDiffer>
    <experiments>2</experiments>
</comment>
<comment type="interaction">
    <interactant intactId="EBI-702370">
        <id>Q14134</id>
    </interactant>
    <interactant intactId="EBI-1058674">
        <id>Q92764</id>
        <label>KRT35</label>
    </interactant>
    <organismsDiffer>false</organismsDiffer>
    <experiments>3</experiments>
</comment>
<comment type="interaction">
    <interactant intactId="EBI-702370">
        <id>Q14134</id>
    </interactant>
    <interactant intactId="EBI-702187">
        <id>P13647</id>
        <label>KRT5</label>
    </interactant>
    <organismsDiffer>false</organismsDiffer>
    <experiments>2</experiments>
</comment>
<comment type="interaction">
    <interactant intactId="EBI-702370">
        <id>Q14134</id>
    </interactant>
    <interactant intactId="EBI-741037">
        <id>Q9BRK4</id>
        <label>LZTS2</label>
    </interactant>
    <organismsDiffer>false</organismsDiffer>
    <experiments>4</experiments>
</comment>
<comment type="interaction">
    <interactant intactId="EBI-702370">
        <id>Q14134</id>
    </interactant>
    <interactant intactId="EBI-742610">
        <id>Q9Y6D9</id>
        <label>MAD1L1</label>
    </interactant>
    <organismsDiffer>false</organismsDiffer>
    <experiments>7</experiments>
</comment>
<comment type="interaction">
    <interactant intactId="EBI-702370">
        <id>Q14134</id>
    </interactant>
    <interactant intactId="EBI-11522433">
        <id>Q5JR59-3</id>
        <label>MTUS2</label>
    </interactant>
    <organismsDiffer>false</organismsDiffer>
    <experiments>3</experiments>
</comment>
<comment type="interaction">
    <interactant intactId="EBI-702370">
        <id>Q14134</id>
    </interactant>
    <interactant intactId="EBI-10271199">
        <id>Q8NI38</id>
        <label>NFKBID</label>
    </interactant>
    <organismsDiffer>false</organismsDiffer>
    <experiments>3</experiments>
</comment>
<comment type="interaction">
    <interactant intactId="EBI-702370">
        <id>Q14134</id>
    </interactant>
    <interactant intactId="EBI-740098">
        <id>P36406</id>
        <label>TRIM23</label>
    </interactant>
    <organismsDiffer>false</organismsDiffer>
    <experiments>4</experiments>
</comment>
<comment type="interaction">
    <interactant intactId="EBI-702370">
        <id>Q14134</id>
    </interactant>
    <interactant intactId="EBI-702370">
        <id>Q14134</id>
        <label>TRIM29</label>
    </interactant>
    <organismsDiffer>false</organismsDiffer>
    <experiments>5</experiments>
</comment>
<comment type="interaction">
    <interactant intactId="EBI-702370">
        <id>Q14134</id>
    </interactant>
    <interactant intactId="EBI-742327">
        <id>Q15654</id>
        <label>TRIP6</label>
    </interactant>
    <organismsDiffer>false</organismsDiffer>
    <experiments>3</experiments>
</comment>
<comment type="interaction">
    <interactant intactId="EBI-702370">
        <id>Q14134</id>
    </interactant>
    <interactant intactId="EBI-25475847">
        <id>PRO_0000449619</id>
        <label>rep</label>
        <dbReference type="UniProtKB" id="P0DTD1"/>
    </interactant>
    <organismsDiffer>true</organismsDiffer>
    <experiments>2</experiments>
</comment>
<comment type="subcellular location">
    <subcellularLocation>
        <location evidence="8">Cytoplasm</location>
    </subcellularLocation>
    <subcellularLocation>
        <location evidence="6">Lysosome</location>
    </subcellularLocation>
    <text>Colocalizes with intermediate filaments.</text>
</comment>
<comment type="alternative products">
    <event type="alternative splicing"/>
    <isoform>
        <id>Q14134-1</id>
        <name>Alpha</name>
        <sequence type="displayed"/>
    </isoform>
    <isoform>
        <id>Q14134-2</id>
        <name>Beta</name>
        <sequence type="described" ref="VSP_011999"/>
    </isoform>
</comment>
<comment type="tissue specificity">
    <text evidence="4">Expressed in placenta, prostate and thymus.</text>
</comment>
<comment type="PTM">
    <text evidence="9">Constitutively phosphorylated by PKC on serine/threonine in A431 cells.</text>
</comment>
<reference key="1">
    <citation type="journal article" date="1994" name="Genomics">
        <title>Nucleotide sequence analysis of a candidate gene for ataxia-telangiectasia group D (ATDC).</title>
        <authorList>
            <person name="Leonhardt E.A."/>
            <person name="Kapp L.N."/>
            <person name="Young B.R."/>
            <person name="Murnane J.P."/>
        </authorList>
    </citation>
    <scope>NUCLEOTIDE SEQUENCE [MRNA] (ISOFORM ALPHA)</scope>
</reference>
<reference key="2">
    <citation type="journal article" date="2001" name="EMBO J.">
        <title>The tripartite motif family identifies cell compartments.</title>
        <authorList>
            <person name="Reymond A."/>
            <person name="Meroni G."/>
            <person name="Fantozzi A."/>
            <person name="Merla G."/>
            <person name="Cairo S."/>
            <person name="Luzi L."/>
            <person name="Riganelli D."/>
            <person name="Zanaria E."/>
            <person name="Messali S."/>
            <person name="Cainarca S."/>
            <person name="Guffanti A."/>
            <person name="Minucci S."/>
            <person name="Pelicci P.G."/>
            <person name="Ballabio A."/>
        </authorList>
    </citation>
    <scope>NUCLEOTIDE SEQUENCE [MRNA] (ISOFORMS ALPHA AND BETA)</scope>
    <scope>TISSUE SPECIFICITY</scope>
</reference>
<reference key="3">
    <citation type="journal article" date="2004" name="Genome Res.">
        <title>The status, quality, and expansion of the NIH full-length cDNA project: the Mammalian Gene Collection (MGC).</title>
        <authorList>
            <consortium name="The MGC Project Team"/>
        </authorList>
    </citation>
    <scope>NUCLEOTIDE SEQUENCE [LARGE SCALE MRNA] (ISOFORM ALPHA)</scope>
    <source>
        <tissue>Astrocytoma</tissue>
    </source>
</reference>
<reference key="4">
    <citation type="journal article" date="1995" name="Proc. Natl. Acad. Sci. U.S.A.">
        <title>The product of the ataxia-telangiectasia group D complementing gene, ATDC, interacts with a protein kinase C substrate and inhibitor.</title>
        <authorList>
            <person name="Brzoska P.M."/>
            <person name="Chen H."/>
            <person name="Zhu Y."/>
            <person name="Levin N.A."/>
            <person name="Disatnik M.H."/>
            <person name="Mochly-Rosen D."/>
            <person name="Murnane J.P."/>
            <person name="Christman M.F."/>
        </authorList>
    </citation>
    <scope>INTERACTION WITH VIM AND HINT1</scope>
    <scope>SUBCELLULAR LOCATION</scope>
</reference>
<reference key="5">
    <citation type="journal article" date="1996" name="Int. J. Cancer">
        <title>Expression of the ATDC (ataxia telangiectasia group D-complementing) gene in A431 human squamous carcinoma cells.</title>
        <authorList>
            <person name="Laderoute K.R."/>
            <person name="Knapp A.M."/>
            <person name="Green C.J."/>
            <person name="Sutherland R.M."/>
            <person name="Kapp L.N."/>
        </authorList>
    </citation>
    <scope>PHOSPHORYLATION</scope>
</reference>
<reference key="6">
    <citation type="journal article" date="2006" name="Nat. Biotechnol.">
        <title>A probability-based approach for high-throughput protein phosphorylation analysis and site localization.</title>
        <authorList>
            <person name="Beausoleil S.A."/>
            <person name="Villen J."/>
            <person name="Gerber S.A."/>
            <person name="Rush J."/>
            <person name="Gygi S.P."/>
        </authorList>
    </citation>
    <scope>PHOSPHORYLATION [LARGE SCALE ANALYSIS] AT SER-104</scope>
    <scope>IDENTIFICATION BY MASS SPECTROMETRY [LARGE SCALE ANALYSIS]</scope>
    <source>
        <tissue>Cervix carcinoma</tissue>
    </source>
</reference>
<reference key="7">
    <citation type="journal article" date="2008" name="Mol. Cell">
        <title>Kinase-selective enrichment enables quantitative phosphoproteomics of the kinome across the cell cycle.</title>
        <authorList>
            <person name="Daub H."/>
            <person name="Olsen J.V."/>
            <person name="Bairlein M."/>
            <person name="Gnad F."/>
            <person name="Oppermann F.S."/>
            <person name="Korner R."/>
            <person name="Greff Z."/>
            <person name="Keri G."/>
            <person name="Stemmann O."/>
            <person name="Mann M."/>
        </authorList>
    </citation>
    <scope>IDENTIFICATION BY MASS SPECTROMETRY [LARGE SCALE ANALYSIS]</scope>
    <source>
        <tissue>Cervix carcinoma</tissue>
    </source>
</reference>
<reference key="8">
    <citation type="journal article" date="2008" name="Proc. Natl. Acad. Sci. U.S.A.">
        <title>A quantitative atlas of mitotic phosphorylation.</title>
        <authorList>
            <person name="Dephoure N."/>
            <person name="Zhou C."/>
            <person name="Villen J."/>
            <person name="Beausoleil S.A."/>
            <person name="Bakalarski C.E."/>
            <person name="Elledge S.J."/>
            <person name="Gygi S.P."/>
        </authorList>
    </citation>
    <scope>PHOSPHORYLATION [LARGE SCALE ANALYSIS] AT SER-21; SER-104; THR-476 AND SER-489</scope>
    <scope>IDENTIFICATION BY MASS SPECTROMETRY [LARGE SCALE ANALYSIS]</scope>
    <source>
        <tissue>Cervix carcinoma</tissue>
    </source>
</reference>
<reference key="9">
    <citation type="journal article" date="2010" name="Sci. Signal.">
        <title>Quantitative phosphoproteomics reveals widespread full phosphorylation site occupancy during mitosis.</title>
        <authorList>
            <person name="Olsen J.V."/>
            <person name="Vermeulen M."/>
            <person name="Santamaria A."/>
            <person name="Kumar C."/>
            <person name="Miller M.L."/>
            <person name="Jensen L.J."/>
            <person name="Gnad F."/>
            <person name="Cox J."/>
            <person name="Jensen T.S."/>
            <person name="Nigg E.A."/>
            <person name="Brunak S."/>
            <person name="Mann M."/>
        </authorList>
    </citation>
    <scope>PHOSPHORYLATION [LARGE SCALE ANALYSIS] AT SER-21 AND SER-104</scope>
    <scope>IDENTIFICATION BY MASS SPECTROMETRY [LARGE SCALE ANALYSIS]</scope>
    <source>
        <tissue>Cervix carcinoma</tissue>
    </source>
</reference>
<reference key="10">
    <citation type="journal article" date="2011" name="BMC Syst. Biol.">
        <title>Initial characterization of the human central proteome.</title>
        <authorList>
            <person name="Burkard T.R."/>
            <person name="Planyavsky M."/>
            <person name="Kaupe I."/>
            <person name="Breitwieser F.P."/>
            <person name="Buerckstuemmer T."/>
            <person name="Bennett K.L."/>
            <person name="Superti-Furga G."/>
            <person name="Colinge J."/>
        </authorList>
    </citation>
    <scope>IDENTIFICATION BY MASS SPECTROMETRY [LARGE SCALE ANALYSIS]</scope>
</reference>
<reference key="11">
    <citation type="journal article" date="2013" name="J. Proteome Res.">
        <title>Toward a comprehensive characterization of a human cancer cell phosphoproteome.</title>
        <authorList>
            <person name="Zhou H."/>
            <person name="Di Palma S."/>
            <person name="Preisinger C."/>
            <person name="Peng M."/>
            <person name="Polat A.N."/>
            <person name="Heck A.J."/>
            <person name="Mohammed S."/>
        </authorList>
    </citation>
    <scope>PHOSPHORYLATION [LARGE SCALE ANALYSIS] AT SER-21; SER-28; SER-58; SER-104 AND TYR-106</scope>
    <scope>IDENTIFICATION BY MASS SPECTROMETRY [LARGE SCALE ANALYSIS]</scope>
    <source>
        <tissue>Cervix carcinoma</tissue>
    </source>
</reference>
<reference key="12">
    <citation type="submission" date="2005-11" db="PDB data bank">
        <title>Solution structure of the ZF-B_box type2 domain of human tripartite motif protein TRIM29 isoform alpha.</title>
        <authorList>
            <consortium name="RIKEN structural genomics initiative (RSGI)"/>
        </authorList>
    </citation>
    <scope>STRUCTURE BY NMR OF 212-270</scope>
</reference>
<reference key="13">
    <citation type="journal article" date="2006" name="Science">
        <title>The consensus coding sequences of human breast and colorectal cancers.</title>
        <authorList>
            <person name="Sjoeblom T."/>
            <person name="Jones S."/>
            <person name="Wood L.D."/>
            <person name="Parsons D.W."/>
            <person name="Lin J."/>
            <person name="Barber T.D."/>
            <person name="Mandelker D."/>
            <person name="Leary R.J."/>
            <person name="Ptak J."/>
            <person name="Silliman N."/>
            <person name="Szabo S."/>
            <person name="Buckhaults P."/>
            <person name="Farrell C."/>
            <person name="Meeh P."/>
            <person name="Markowitz S.D."/>
            <person name="Willis J."/>
            <person name="Dawson D."/>
            <person name="Willson J.K.V."/>
            <person name="Gazdar A.F."/>
            <person name="Hartigan J."/>
            <person name="Wu L."/>
            <person name="Liu C."/>
            <person name="Parmigiani G."/>
            <person name="Park B.H."/>
            <person name="Bachman K.E."/>
            <person name="Papadopoulos N."/>
            <person name="Vogelstein B."/>
            <person name="Kinzler K.W."/>
            <person name="Velculescu V.E."/>
        </authorList>
    </citation>
    <scope>VARIANT [LARGE SCALE ANALYSIS] PHE-514</scope>
</reference>
<reference key="14">
    <citation type="journal article" date="2016" name="Nat. Immunol.">
        <title>Identification of a role for TRIM29 in the control of innate immunity in the respiratory tract.</title>
        <authorList>
            <person name="Xing J."/>
            <person name="Weng L."/>
            <person name="Yuan B."/>
            <person name="Wang Z."/>
            <person name="Jia L."/>
            <person name="Jin R."/>
            <person name="Lu H."/>
            <person name="Li X.C."/>
            <person name="Liu Y.J."/>
            <person name="Zhang Z."/>
        </authorList>
    </citation>
    <scope>FUNCTION</scope>
    <scope>INTERACTION WITH IKBKG</scope>
    <scope>SUBCELLULAR LOCATION</scope>
</reference>
<reference key="15">
    <citation type="journal article" date="2017" name="Nat. Commun.">
        <title>TRIM29 promotes DNA virus infections by inhibiting innate immune response.</title>
        <authorList>
            <person name="Xing J."/>
            <person name="Zhang A."/>
            <person name="Zhang H."/>
            <person name="Wang J."/>
            <person name="Li X.C."/>
            <person name="Zeng M.S."/>
            <person name="Zhang Z."/>
        </authorList>
    </citation>
    <scope>FUNCTION</scope>
    <scope>INTERACTION WITH STING1</scope>
</reference>
<gene>
    <name type="primary">TRIM29</name>
    <name type="synonym">ATDC</name>
</gene>
<proteinExistence type="evidence at protein level"/>
<organism>
    <name type="scientific">Homo sapiens</name>
    <name type="common">Human</name>
    <dbReference type="NCBI Taxonomy" id="9606"/>
    <lineage>
        <taxon>Eukaryota</taxon>
        <taxon>Metazoa</taxon>
        <taxon>Chordata</taxon>
        <taxon>Craniata</taxon>
        <taxon>Vertebrata</taxon>
        <taxon>Euteleostomi</taxon>
        <taxon>Mammalia</taxon>
        <taxon>Eutheria</taxon>
        <taxon>Euarchontoglires</taxon>
        <taxon>Primates</taxon>
        <taxon>Haplorrhini</taxon>
        <taxon>Catarrhini</taxon>
        <taxon>Hominidae</taxon>
        <taxon>Homo</taxon>
    </lineage>
</organism>
<protein>
    <recommendedName>
        <fullName>Tripartite motif-containing protein 29</fullName>
    </recommendedName>
    <alternativeName>
        <fullName>Ataxia telangiectasia group D-associated protein</fullName>
    </alternativeName>
</protein>
<evidence type="ECO:0000255" key="1"/>
<evidence type="ECO:0000255" key="2">
    <source>
        <dbReference type="PROSITE-ProRule" id="PRU00024"/>
    </source>
</evidence>
<evidence type="ECO:0000256" key="3">
    <source>
        <dbReference type="SAM" id="MobiDB-lite"/>
    </source>
</evidence>
<evidence type="ECO:0000269" key="4">
    <source>
    </source>
</evidence>
<evidence type="ECO:0000269" key="5">
    <source>
    </source>
</evidence>
<evidence type="ECO:0000269" key="6">
    <source>
    </source>
</evidence>
<evidence type="ECO:0000269" key="7">
    <source>
    </source>
</evidence>
<evidence type="ECO:0000269" key="8">
    <source>
    </source>
</evidence>
<evidence type="ECO:0000269" key="9">
    <source>
    </source>
</evidence>
<evidence type="ECO:0000303" key="10">
    <source>
    </source>
</evidence>
<evidence type="ECO:0000305" key="11"/>
<evidence type="ECO:0007744" key="12">
    <source>
    </source>
</evidence>
<evidence type="ECO:0007744" key="13">
    <source>
    </source>
</evidence>
<evidence type="ECO:0007744" key="14">
    <source>
    </source>
</evidence>
<evidence type="ECO:0007744" key="15">
    <source>
    </source>
</evidence>
<evidence type="ECO:0007829" key="16">
    <source>
        <dbReference type="PDB" id="2CSV"/>
    </source>
</evidence>
<keyword id="KW-0002">3D-structure</keyword>
<keyword id="KW-0025">Alternative splicing</keyword>
<keyword id="KW-0175">Coiled coil</keyword>
<keyword id="KW-0963">Cytoplasm</keyword>
<keyword id="KW-0391">Immunity</keyword>
<keyword id="KW-0399">Innate immunity</keyword>
<keyword id="KW-0458">Lysosome</keyword>
<keyword id="KW-0479">Metal-binding</keyword>
<keyword id="KW-0597">Phosphoprotein</keyword>
<keyword id="KW-1267">Proteomics identification</keyword>
<keyword id="KW-1185">Reference proteome</keyword>
<keyword id="KW-0862">Zinc</keyword>
<keyword id="KW-0863">Zinc-finger</keyword>